<proteinExistence type="inferred from homology"/>
<evidence type="ECO:0000255" key="1">
    <source>
        <dbReference type="HAMAP-Rule" id="MF_01906"/>
    </source>
</evidence>
<accession>A2S9Q3</accession>
<reference key="1">
    <citation type="journal article" date="2010" name="Genome Biol. Evol.">
        <title>Continuing evolution of Burkholderia mallei through genome reduction and large-scale rearrangements.</title>
        <authorList>
            <person name="Losada L."/>
            <person name="Ronning C.M."/>
            <person name="DeShazer D."/>
            <person name="Woods D."/>
            <person name="Fedorova N."/>
            <person name="Kim H.S."/>
            <person name="Shabalina S.A."/>
            <person name="Pearson T.R."/>
            <person name="Brinkac L."/>
            <person name="Tan P."/>
            <person name="Nandi T."/>
            <person name="Crabtree J."/>
            <person name="Badger J."/>
            <person name="Beckstrom-Sternberg S."/>
            <person name="Saqib M."/>
            <person name="Schutzer S.E."/>
            <person name="Keim P."/>
            <person name="Nierman W.C."/>
        </authorList>
    </citation>
    <scope>NUCLEOTIDE SEQUENCE [LARGE SCALE GENOMIC DNA]</scope>
    <source>
        <strain>NCTC 10229</strain>
    </source>
</reference>
<sequence length="699" mass="71661">MTAIRGGSRRAPGLALALLGGVLLGACHGDENAQVNALPGFVSGSVRKTAYDGASDDLLTAGLGKTGLGSDTRPGFANPAQPSAAELRRLAIYSNYRALVDITPNGGYGRFWGPNVDLAGNDTLGEGKIAGTEYLAYSDDGSGRKNVTLLVQVPASFDPANPCIVTATASGSRGVYGAIAAAGEWGLKRGCAVAYNDKGGGNGAHEIGTGVVTLIDGTLATASSAGSSSLFTASESSSTLAAFNSAFPNRYAYKHAHSQQNPEQDWGLVTLQAVEFAYWALNEQFGPVVDGTRHGIRYRPGDITTIAASVSNGGGSALAAAEQDTRGWITAVVVGEPQINVRMTPGVTVEQGGAPVPSFGRPLADYATLANLLQPCAAAAVAATGAPYLSALPMGVTQSIRTQRCATLAAAGLVSGADTASQASDALAQLYAAGYLADSDLLQAPMWDSQAMPAIAVTYANAYTRSRVTDNLCNFSFATTNPVTGAVAAPAVSPMTNLFGAGNGVPPTNGINLVFNGASGGVDHRLATPDASFAGAFCLRQLWTANQLGIGTNVDAVRVAANLQHKPAIIVHGRSDALVPVNHASRAYVAQNSATEGRASQLSFYEVTNGQHFDAFLSVPGFDTRFVPVHYYDEQALNLMWNHLKSGAPLPPSQVIRTVPRGGVPGAAPALSTANLPPIVQSPGANAIAVNAGVIDVPL</sequence>
<protein>
    <recommendedName>
        <fullName evidence="1">D-(-)-3-hydroxybutyrate oligomer hydrolase</fullName>
        <shortName evidence="1">3HB-oligomer hydrolase</shortName>
        <shortName evidence="1">3HBOH</shortName>
        <ecNumber evidence="1">3.1.1.22</ecNumber>
    </recommendedName>
</protein>
<gene>
    <name type="ordered locus">BMA10229_A2720</name>
</gene>
<dbReference type="EC" id="3.1.1.22" evidence="1"/>
<dbReference type="EMBL" id="CP000546">
    <property type="protein sequence ID" value="ABN03220.1"/>
    <property type="molecule type" value="Genomic_DNA"/>
</dbReference>
<dbReference type="RefSeq" id="WP_011832341.1">
    <property type="nucleotide sequence ID" value="NC_008836.1"/>
</dbReference>
<dbReference type="ESTHER" id="burps-hboh">
    <property type="family name" value="OHBut_olig_hydro_put"/>
</dbReference>
<dbReference type="KEGG" id="bml:BMA10229_A2720"/>
<dbReference type="HOGENOM" id="CLU_420258_0_0_4"/>
<dbReference type="UniPathway" id="UPA00863"/>
<dbReference type="Proteomes" id="UP000002283">
    <property type="component" value="Chromosome I"/>
</dbReference>
<dbReference type="GO" id="GO:0005615">
    <property type="term" value="C:extracellular space"/>
    <property type="evidence" value="ECO:0007669"/>
    <property type="project" value="InterPro"/>
</dbReference>
<dbReference type="GO" id="GO:0047989">
    <property type="term" value="F:hydroxybutyrate-dimer hydrolase activity"/>
    <property type="evidence" value="ECO:0007669"/>
    <property type="project" value="UniProtKB-UniRule"/>
</dbReference>
<dbReference type="GO" id="GO:0019605">
    <property type="term" value="P:butyrate metabolic process"/>
    <property type="evidence" value="ECO:0007669"/>
    <property type="project" value="UniProtKB-UniRule"/>
</dbReference>
<dbReference type="HAMAP" id="MF_01906">
    <property type="entry name" value="3HBOH"/>
    <property type="match status" value="1"/>
</dbReference>
<dbReference type="InterPro" id="IPR029058">
    <property type="entry name" value="AB_hydrolase_fold"/>
</dbReference>
<dbReference type="InterPro" id="IPR016582">
    <property type="entry name" value="OHBut_olig_hydro_put"/>
</dbReference>
<dbReference type="Pfam" id="PF10605">
    <property type="entry name" value="3HBOH"/>
    <property type="match status" value="1"/>
</dbReference>
<dbReference type="PIRSF" id="PIRSF011409">
    <property type="entry name" value="HObutyrate_olig_hydrol"/>
    <property type="match status" value="1"/>
</dbReference>
<dbReference type="SUPFAM" id="SSF53474">
    <property type="entry name" value="alpha/beta-Hydrolases"/>
    <property type="match status" value="1"/>
</dbReference>
<feature type="signal peptide" evidence="1">
    <location>
        <begin position="1"/>
        <end position="33"/>
    </location>
</feature>
<feature type="chain" id="PRO_0000314416" description="D-(-)-3-hydroxybutyrate oligomer hydrolase">
    <location>
        <begin position="34"/>
        <end position="699"/>
    </location>
</feature>
<feature type="active site" description="Charge relay system" evidence="1">
    <location>
        <position position="311"/>
    </location>
</feature>
<keyword id="KW-0378">Hydrolase</keyword>
<keyword id="KW-0964">Secreted</keyword>
<keyword id="KW-0732">Signal</keyword>
<name>HBOH_BURM9</name>
<organism>
    <name type="scientific">Burkholderia mallei (strain NCTC 10229)</name>
    <dbReference type="NCBI Taxonomy" id="412022"/>
    <lineage>
        <taxon>Bacteria</taxon>
        <taxon>Pseudomonadati</taxon>
        <taxon>Pseudomonadota</taxon>
        <taxon>Betaproteobacteria</taxon>
        <taxon>Burkholderiales</taxon>
        <taxon>Burkholderiaceae</taxon>
        <taxon>Burkholderia</taxon>
        <taxon>pseudomallei group</taxon>
    </lineage>
</organism>
<comment type="function">
    <text evidence="1">Participates in the degradation of poly-3-hydroxybutyrate (PHB). It works downstream of poly(3-hydroxybutyrate) depolymerase, hydrolyzing D(-)-3-hydroxybutyrate oligomers of various length (3HB-oligomers) into 3HB-monomers.</text>
</comment>
<comment type="catalytic activity">
    <reaction evidence="1">
        <text>(3R)-hydroxybutanoate dimer + H2O = 2 (R)-3-hydroxybutanoate + H(+)</text>
        <dbReference type="Rhea" id="RHEA:10172"/>
        <dbReference type="ChEBI" id="CHEBI:10979"/>
        <dbReference type="ChEBI" id="CHEBI:10983"/>
        <dbReference type="ChEBI" id="CHEBI:15377"/>
        <dbReference type="ChEBI" id="CHEBI:15378"/>
        <dbReference type="EC" id="3.1.1.22"/>
    </reaction>
</comment>
<comment type="pathway">
    <text evidence="1">Lipid metabolism; butanoate metabolism.</text>
</comment>
<comment type="subcellular location">
    <subcellularLocation>
        <location evidence="1">Secreted</location>
    </subcellularLocation>
</comment>
<comment type="similarity">
    <text evidence="1">Belongs to the D-(-)-3-hydroxybutyrate oligomer hydrolase family.</text>
</comment>